<keyword id="KW-0687">Ribonucleoprotein</keyword>
<keyword id="KW-0689">Ribosomal protein</keyword>
<organism>
    <name type="scientific">Clostridium perfringens (strain SM101 / Type A)</name>
    <dbReference type="NCBI Taxonomy" id="289380"/>
    <lineage>
        <taxon>Bacteria</taxon>
        <taxon>Bacillati</taxon>
        <taxon>Bacillota</taxon>
        <taxon>Clostridia</taxon>
        <taxon>Eubacteriales</taxon>
        <taxon>Clostridiaceae</taxon>
        <taxon>Clostridium</taxon>
    </lineage>
</organism>
<reference key="1">
    <citation type="journal article" date="2006" name="Genome Res.">
        <title>Skewed genomic variability in strains of the toxigenic bacterial pathogen, Clostridium perfringens.</title>
        <authorList>
            <person name="Myers G.S.A."/>
            <person name="Rasko D.A."/>
            <person name="Cheung J.K."/>
            <person name="Ravel J."/>
            <person name="Seshadri R."/>
            <person name="DeBoy R.T."/>
            <person name="Ren Q."/>
            <person name="Varga J."/>
            <person name="Awad M.M."/>
            <person name="Brinkac L.M."/>
            <person name="Daugherty S.C."/>
            <person name="Haft D.H."/>
            <person name="Dodson R.J."/>
            <person name="Madupu R."/>
            <person name="Nelson W.C."/>
            <person name="Rosovitz M.J."/>
            <person name="Sullivan S.A."/>
            <person name="Khouri H."/>
            <person name="Dimitrov G.I."/>
            <person name="Watkins K.L."/>
            <person name="Mulligan S."/>
            <person name="Benton J."/>
            <person name="Radune D."/>
            <person name="Fisher D.J."/>
            <person name="Atkins H.S."/>
            <person name="Hiscox T."/>
            <person name="Jost B.H."/>
            <person name="Billington S.J."/>
            <person name="Songer J.G."/>
            <person name="McClane B.A."/>
            <person name="Titball R.W."/>
            <person name="Rood J.I."/>
            <person name="Melville S.B."/>
            <person name="Paulsen I.T."/>
        </authorList>
    </citation>
    <scope>NUCLEOTIDE SEQUENCE [LARGE SCALE GENOMIC DNA]</scope>
    <source>
        <strain>SM101 / Type A</strain>
    </source>
</reference>
<sequence>MSKQKIRIRLKAFDHTILDQSAEKIVETAKSTGAKVVGPVPLPTEKDVITILRAVHKYKDSREQFEVRTHKRLIDIVNPSPKTVDALMRLNLPAGVDIEIKL</sequence>
<gene>
    <name evidence="1" type="primary">rpsJ</name>
    <name type="ordered locus">CPR_2400</name>
</gene>
<dbReference type="EMBL" id="CP000312">
    <property type="protein sequence ID" value="ABG87135.1"/>
    <property type="molecule type" value="Genomic_DNA"/>
</dbReference>
<dbReference type="RefSeq" id="WP_003479233.1">
    <property type="nucleotide sequence ID" value="NZ_CAXVKH010000004.1"/>
</dbReference>
<dbReference type="SMR" id="Q0SQE3"/>
<dbReference type="GeneID" id="93001008"/>
<dbReference type="KEGG" id="cpr:CPR_2400"/>
<dbReference type="Proteomes" id="UP000001824">
    <property type="component" value="Chromosome"/>
</dbReference>
<dbReference type="GO" id="GO:1990904">
    <property type="term" value="C:ribonucleoprotein complex"/>
    <property type="evidence" value="ECO:0007669"/>
    <property type="project" value="UniProtKB-KW"/>
</dbReference>
<dbReference type="GO" id="GO:0005840">
    <property type="term" value="C:ribosome"/>
    <property type="evidence" value="ECO:0007669"/>
    <property type="project" value="UniProtKB-KW"/>
</dbReference>
<dbReference type="GO" id="GO:0003735">
    <property type="term" value="F:structural constituent of ribosome"/>
    <property type="evidence" value="ECO:0007669"/>
    <property type="project" value="InterPro"/>
</dbReference>
<dbReference type="GO" id="GO:0000049">
    <property type="term" value="F:tRNA binding"/>
    <property type="evidence" value="ECO:0007669"/>
    <property type="project" value="UniProtKB-UniRule"/>
</dbReference>
<dbReference type="GO" id="GO:0006412">
    <property type="term" value="P:translation"/>
    <property type="evidence" value="ECO:0007669"/>
    <property type="project" value="UniProtKB-UniRule"/>
</dbReference>
<dbReference type="FunFam" id="3.30.70.600:FF:000001">
    <property type="entry name" value="30S ribosomal protein S10"/>
    <property type="match status" value="1"/>
</dbReference>
<dbReference type="Gene3D" id="3.30.70.600">
    <property type="entry name" value="Ribosomal protein S10 domain"/>
    <property type="match status" value="1"/>
</dbReference>
<dbReference type="HAMAP" id="MF_00508">
    <property type="entry name" value="Ribosomal_uS10"/>
    <property type="match status" value="1"/>
</dbReference>
<dbReference type="InterPro" id="IPR001848">
    <property type="entry name" value="Ribosomal_uS10"/>
</dbReference>
<dbReference type="InterPro" id="IPR018268">
    <property type="entry name" value="Ribosomal_uS10_CS"/>
</dbReference>
<dbReference type="InterPro" id="IPR027486">
    <property type="entry name" value="Ribosomal_uS10_dom"/>
</dbReference>
<dbReference type="InterPro" id="IPR036838">
    <property type="entry name" value="Ribosomal_uS10_dom_sf"/>
</dbReference>
<dbReference type="NCBIfam" id="NF001861">
    <property type="entry name" value="PRK00596.1"/>
    <property type="match status" value="1"/>
</dbReference>
<dbReference type="NCBIfam" id="TIGR01049">
    <property type="entry name" value="rpsJ_bact"/>
    <property type="match status" value="1"/>
</dbReference>
<dbReference type="PANTHER" id="PTHR11700">
    <property type="entry name" value="30S RIBOSOMAL PROTEIN S10 FAMILY MEMBER"/>
    <property type="match status" value="1"/>
</dbReference>
<dbReference type="Pfam" id="PF00338">
    <property type="entry name" value="Ribosomal_S10"/>
    <property type="match status" value="1"/>
</dbReference>
<dbReference type="PRINTS" id="PR00971">
    <property type="entry name" value="RIBOSOMALS10"/>
</dbReference>
<dbReference type="SMART" id="SM01403">
    <property type="entry name" value="Ribosomal_S10"/>
    <property type="match status" value="1"/>
</dbReference>
<dbReference type="SUPFAM" id="SSF54999">
    <property type="entry name" value="Ribosomal protein S10"/>
    <property type="match status" value="1"/>
</dbReference>
<dbReference type="PROSITE" id="PS00361">
    <property type="entry name" value="RIBOSOMAL_S10"/>
    <property type="match status" value="1"/>
</dbReference>
<evidence type="ECO:0000255" key="1">
    <source>
        <dbReference type="HAMAP-Rule" id="MF_00508"/>
    </source>
</evidence>
<evidence type="ECO:0000305" key="2"/>
<feature type="chain" id="PRO_0000258544" description="Small ribosomal subunit protein uS10">
    <location>
        <begin position="1"/>
        <end position="102"/>
    </location>
</feature>
<protein>
    <recommendedName>
        <fullName evidence="1">Small ribosomal subunit protein uS10</fullName>
    </recommendedName>
    <alternativeName>
        <fullName evidence="2">30S ribosomal protein S10</fullName>
    </alternativeName>
</protein>
<proteinExistence type="inferred from homology"/>
<accession>Q0SQE3</accession>
<comment type="function">
    <text evidence="1">Involved in the binding of tRNA to the ribosomes.</text>
</comment>
<comment type="subunit">
    <text evidence="1">Part of the 30S ribosomal subunit.</text>
</comment>
<comment type="similarity">
    <text evidence="1">Belongs to the universal ribosomal protein uS10 family.</text>
</comment>
<name>RS10_CLOPS</name>